<evidence type="ECO:0000255" key="1"/>
<evidence type="ECO:0000269" key="2">
    <source>
    </source>
</evidence>
<evidence type="ECO:0000305" key="3"/>
<evidence type="ECO:0000305" key="4">
    <source>
    </source>
</evidence>
<evidence type="ECO:0000312" key="5">
    <source>
        <dbReference type="EMBL" id="CCP44227.1"/>
    </source>
</evidence>
<sequence>MSFVVANTEFVSGAAGNLARLGSMISAANSAAAAQTTAVAAAGADEVSAAVAALFGAHGQTYQVLSAQAAAFHSQFVQALSGGAQAYAAAEATNFGPLQPLFDVINAPTLALLNRPLIGNGADGTAANPNGQAGGLLIGNGGNGFSPAAGPGGNGGAAGLLGHGGNGGVGALGANGGAGGTGGWLFGNGGAGGNSGGGGGAGGIGGSAVLFGAGGAGGISPNGMGAGGSGGNGGLFFGNGGAGASSFLGGGGAGGRAFLFGDGGAGGAALSAGSAGRGGDAGFFYGNGGAGGSGAGGASSAHGGAGGQAGLFGNGGEGGDGGALGGNGGNGGNAQLIGNGGDGGDGGGAGAPGLGGRGGLLLGLPGANGT</sequence>
<name>PG29_MYCTU</name>
<proteinExistence type="evidence at protein level"/>
<dbReference type="EMBL" id="AL123456">
    <property type="protein sequence ID" value="CCP44227.1"/>
    <property type="molecule type" value="Genomic_DNA"/>
</dbReference>
<dbReference type="RefSeq" id="WP_003407494.1">
    <property type="nucleotide sequence ID" value="NZ_NVQJ01000004.1"/>
</dbReference>
<dbReference type="RefSeq" id="YP_177814.1">
    <property type="nucleotide sequence ID" value="NC_000962.3"/>
</dbReference>
<dbReference type="SMR" id="Q79FP0"/>
<dbReference type="STRING" id="83332.Rv1468c"/>
<dbReference type="PaxDb" id="83332-Rv1468c"/>
<dbReference type="DNASU" id="886556"/>
<dbReference type="GeneID" id="886556"/>
<dbReference type="KEGG" id="mtu:Rv1468c"/>
<dbReference type="KEGG" id="mtv:RVBD_1468c"/>
<dbReference type="PATRIC" id="fig|83332.111.peg.1634"/>
<dbReference type="TubercuList" id="Rv1468c"/>
<dbReference type="eggNOG" id="COG3391">
    <property type="taxonomic scope" value="Bacteria"/>
</dbReference>
<dbReference type="InParanoid" id="Q79FP0"/>
<dbReference type="OrthoDB" id="4753904at2"/>
<dbReference type="Proteomes" id="UP000001584">
    <property type="component" value="Chromosome"/>
</dbReference>
<dbReference type="GO" id="GO:0009986">
    <property type="term" value="C:cell surface"/>
    <property type="evidence" value="ECO:0007669"/>
    <property type="project" value="UniProtKB-SubCell"/>
</dbReference>
<dbReference type="GO" id="GO:0005576">
    <property type="term" value="C:extracellular region"/>
    <property type="evidence" value="ECO:0007669"/>
    <property type="project" value="UniProtKB-KW"/>
</dbReference>
<dbReference type="Gene3D" id="1.10.287.850">
    <property type="entry name" value="HP0062-like domain"/>
    <property type="match status" value="1"/>
</dbReference>
<dbReference type="InterPro" id="IPR000084">
    <property type="entry name" value="PE-PGRS_N"/>
</dbReference>
<dbReference type="InterPro" id="IPR048996">
    <property type="entry name" value="PGRS_rpt"/>
</dbReference>
<dbReference type="Pfam" id="PF00934">
    <property type="entry name" value="PE"/>
    <property type="match status" value="1"/>
</dbReference>
<dbReference type="Pfam" id="PF21526">
    <property type="entry name" value="PGRS"/>
    <property type="match status" value="1"/>
</dbReference>
<dbReference type="PRINTS" id="PR01228">
    <property type="entry name" value="EGGSHELL"/>
</dbReference>
<dbReference type="SUPFAM" id="SSF140459">
    <property type="entry name" value="PE/PPE dimer-like"/>
    <property type="match status" value="1"/>
</dbReference>
<gene>
    <name evidence="5" type="primary">PE_PGRS29</name>
    <name evidence="5" type="ordered locus">Rv1468c</name>
</gene>
<feature type="chain" id="PRO_5004286516" description="Ubiquitin-binding protein Rv1468c">
    <location>
        <begin position="1"/>
        <end position="370"/>
    </location>
</feature>
<feature type="domain" description="PE" evidence="1">
    <location>
        <begin position="1"/>
        <end position="93"/>
    </location>
</feature>
<feature type="region of interest" description="UBA" evidence="4">
    <location>
        <begin position="1"/>
        <end position="72"/>
    </location>
</feature>
<feature type="site" description="Important for interaction with host ubiquitin" evidence="4">
    <location>
        <begin position="64"/>
        <end position="65"/>
    </location>
</feature>
<feature type="mutagenesis site" description="Abolishes interaction with host ubiquitin, impairs host xenophagy and increases bacterial loads in mice with enhanced inflammatory responses." evidence="2">
    <location>
        <begin position="1"/>
        <end position="66"/>
    </location>
</feature>
<feature type="mutagenesis site" description="Reduces interaction with host ubiquitin." evidence="2">
    <original>V</original>
    <variation>G</variation>
    <location>
        <position position="64"/>
    </location>
</feature>
<feature type="mutagenesis site" description="Reduces interaction with host ubiquitin. Shows enhanced viability, reduced p62 aggregation and reduced colocalization with LC3 and LAMP1 in BMDMs." evidence="2">
    <original>L</original>
    <variation>G</variation>
    <location>
        <position position="65"/>
    </location>
</feature>
<accession>Q79FP0</accession>
<accession>F2GET2</accession>
<accession>I6YAM6</accession>
<accession>L0T6Y1</accession>
<reference key="1">
    <citation type="journal article" date="1998" name="Nature">
        <title>Deciphering the biology of Mycobacterium tuberculosis from the complete genome sequence.</title>
        <authorList>
            <person name="Cole S.T."/>
            <person name="Brosch R."/>
            <person name="Parkhill J."/>
            <person name="Garnier T."/>
            <person name="Churcher C.M."/>
            <person name="Harris D.E."/>
            <person name="Gordon S.V."/>
            <person name="Eiglmeier K."/>
            <person name="Gas S."/>
            <person name="Barry C.E. III"/>
            <person name="Tekaia F."/>
            <person name="Badcock K."/>
            <person name="Basham D."/>
            <person name="Brown D."/>
            <person name="Chillingworth T."/>
            <person name="Connor R."/>
            <person name="Davies R.M."/>
            <person name="Devlin K."/>
            <person name="Feltwell T."/>
            <person name="Gentles S."/>
            <person name="Hamlin N."/>
            <person name="Holroyd S."/>
            <person name="Hornsby T."/>
            <person name="Jagels K."/>
            <person name="Krogh A."/>
            <person name="McLean J."/>
            <person name="Moule S."/>
            <person name="Murphy L.D."/>
            <person name="Oliver S."/>
            <person name="Osborne J."/>
            <person name="Quail M.A."/>
            <person name="Rajandream M.A."/>
            <person name="Rogers J."/>
            <person name="Rutter S."/>
            <person name="Seeger K."/>
            <person name="Skelton S."/>
            <person name="Squares S."/>
            <person name="Squares R."/>
            <person name="Sulston J.E."/>
            <person name="Taylor K."/>
            <person name="Whitehead S."/>
            <person name="Barrell B.G."/>
        </authorList>
    </citation>
    <scope>NUCLEOTIDE SEQUENCE [LARGE SCALE GENOMIC DNA]</scope>
    <source>
        <strain>ATCC 25618 / H37Rv</strain>
    </source>
</reference>
<reference key="2">
    <citation type="journal article" date="2019" name="Nat. Commun.">
        <title>A Mycobacterium tuberculosis surface protein recruits ubiquitin to trigger host xenophagy.</title>
        <authorList>
            <person name="Chai Q."/>
            <person name="Wang X."/>
            <person name="Qiang L."/>
            <person name="Zhang Y."/>
            <person name="Ge P."/>
            <person name="Lu Z."/>
            <person name="Zhong Y."/>
            <person name="Li B."/>
            <person name="Wang J."/>
            <person name="Zhang L."/>
            <person name="Zhou D."/>
            <person name="Li W."/>
            <person name="Dong W."/>
            <person name="Pang Y."/>
            <person name="Gao G.F."/>
            <person name="Liu C.H."/>
        </authorList>
    </citation>
    <scope>FUNCTION</scope>
    <scope>INTERACTION WITH HOST UBIQUITIN</scope>
    <scope>SUBCELLULAR LOCATION</scope>
    <scope>INDUCTION</scope>
    <scope>DOMAIN</scope>
    <scope>DISRUPTION PHENOTYPE</scope>
    <scope>MUTAGENESIS OF 1-MET--SER-66; VAL-64 AND LEU-65</scope>
    <source>
        <strain>H37Rv</strain>
    </source>
</reference>
<protein>
    <recommendedName>
        <fullName evidence="3">Ubiquitin-binding protein Rv1468c</fullName>
    </recommendedName>
    <alternativeName>
        <fullName evidence="3">PE-PGRS family protein PE_PGRS29</fullName>
    </alternativeName>
</protein>
<comment type="function">
    <text evidence="2">Mediates direct binding of host ubiquitin (Ub) to the mycobacterial surface, which triggers host xenophagy. Interaction between Rv1468c and ubiquitin recruits autophagy receptor p62 to deliver mycobacteria into LC3-associated autophagosomes. It could be a viable evolutionary strategy adopted by M.tuberculosis to maintain long-term intracellular survival through self-controlling its intracellular bacterial loads to avoid excessive host inflammatory immune responses.</text>
</comment>
<comment type="subunit">
    <text evidence="2">Interacts directly with host polyubiquitin in a UBA-dependent manner.</text>
</comment>
<comment type="subcellular location">
    <subcellularLocation>
        <location evidence="2">Secreted</location>
        <location evidence="2">Cell wall</location>
    </subcellularLocation>
    <subcellularLocation>
        <location evidence="2">Cell surface</location>
    </subcellularLocation>
</comment>
<comment type="induction">
    <text evidence="2">Up-regulated after infection of macrophages.</text>
</comment>
<comment type="domain">
    <text evidence="2">Contains a eukaryotic-like ubiquitin-associated (UBA) domain that mediates interaction with host ubiquitin.</text>
</comment>
<comment type="disruption phenotype">
    <text evidence="2">Deletion mutant shows enhanced viability, reduced p62 aggregation and reduced colocalization with LC3 and LAMP1 in bone marrow-derived murine macrophages (BMDMs).</text>
</comment>
<comment type="similarity">
    <text evidence="3">Belongs to the mycobacterial PE family. PGRS subfamily.</text>
</comment>
<organism>
    <name type="scientific">Mycobacterium tuberculosis (strain ATCC 25618 / H37Rv)</name>
    <dbReference type="NCBI Taxonomy" id="83332"/>
    <lineage>
        <taxon>Bacteria</taxon>
        <taxon>Bacillati</taxon>
        <taxon>Actinomycetota</taxon>
        <taxon>Actinomycetes</taxon>
        <taxon>Mycobacteriales</taxon>
        <taxon>Mycobacteriaceae</taxon>
        <taxon>Mycobacterium</taxon>
        <taxon>Mycobacterium tuberculosis complex</taxon>
    </lineage>
</organism>
<keyword id="KW-0134">Cell wall</keyword>
<keyword id="KW-1185">Reference proteome</keyword>
<keyword id="KW-0964">Secreted</keyword>
<keyword id="KW-0843">Virulence</keyword>